<accession>A8GRF6</accession>
<reference key="1">
    <citation type="submission" date="2007-09" db="EMBL/GenBank/DDBJ databases">
        <title>Complete genome sequence of Rickettsia rickettsii.</title>
        <authorList>
            <person name="Madan A."/>
            <person name="Fahey J."/>
            <person name="Helton E."/>
            <person name="Ketteman M."/>
            <person name="Madan A."/>
            <person name="Rodrigues S."/>
            <person name="Sanchez A."/>
            <person name="Dasch G."/>
            <person name="Eremeeva M."/>
        </authorList>
    </citation>
    <scope>NUCLEOTIDE SEQUENCE [LARGE SCALE GENOMIC DNA]</scope>
    <source>
        <strain>Sheila Smith</strain>
    </source>
</reference>
<gene>
    <name evidence="1" type="primary">lepA</name>
    <name type="ordered locus">A1G_02100</name>
</gene>
<dbReference type="EC" id="3.6.5.n1" evidence="1"/>
<dbReference type="EMBL" id="CP000848">
    <property type="protein sequence ID" value="ABV75981.1"/>
    <property type="molecule type" value="Genomic_DNA"/>
</dbReference>
<dbReference type="RefSeq" id="WP_012150581.1">
    <property type="nucleotide sequence ID" value="NZ_CP121767.1"/>
</dbReference>
<dbReference type="SMR" id="A8GRF6"/>
<dbReference type="GeneID" id="79937143"/>
<dbReference type="KEGG" id="rri:A1G_02100"/>
<dbReference type="HOGENOM" id="CLU_009995_3_3_5"/>
<dbReference type="Proteomes" id="UP000006832">
    <property type="component" value="Chromosome"/>
</dbReference>
<dbReference type="GO" id="GO:0005886">
    <property type="term" value="C:plasma membrane"/>
    <property type="evidence" value="ECO:0007669"/>
    <property type="project" value="UniProtKB-SubCell"/>
</dbReference>
<dbReference type="GO" id="GO:0005525">
    <property type="term" value="F:GTP binding"/>
    <property type="evidence" value="ECO:0007669"/>
    <property type="project" value="UniProtKB-UniRule"/>
</dbReference>
<dbReference type="GO" id="GO:0003924">
    <property type="term" value="F:GTPase activity"/>
    <property type="evidence" value="ECO:0007669"/>
    <property type="project" value="UniProtKB-UniRule"/>
</dbReference>
<dbReference type="GO" id="GO:0097216">
    <property type="term" value="F:guanosine tetraphosphate binding"/>
    <property type="evidence" value="ECO:0007669"/>
    <property type="project" value="UniProtKB-ARBA"/>
</dbReference>
<dbReference type="GO" id="GO:0043022">
    <property type="term" value="F:ribosome binding"/>
    <property type="evidence" value="ECO:0007669"/>
    <property type="project" value="UniProtKB-UniRule"/>
</dbReference>
<dbReference type="GO" id="GO:0003746">
    <property type="term" value="F:translation elongation factor activity"/>
    <property type="evidence" value="ECO:0007669"/>
    <property type="project" value="UniProtKB-UniRule"/>
</dbReference>
<dbReference type="GO" id="GO:0045727">
    <property type="term" value="P:positive regulation of translation"/>
    <property type="evidence" value="ECO:0007669"/>
    <property type="project" value="UniProtKB-UniRule"/>
</dbReference>
<dbReference type="CDD" id="cd03699">
    <property type="entry name" value="EF4_II"/>
    <property type="match status" value="1"/>
</dbReference>
<dbReference type="CDD" id="cd16260">
    <property type="entry name" value="EF4_III"/>
    <property type="match status" value="1"/>
</dbReference>
<dbReference type="CDD" id="cd01890">
    <property type="entry name" value="LepA"/>
    <property type="match status" value="1"/>
</dbReference>
<dbReference type="CDD" id="cd03709">
    <property type="entry name" value="lepA_C"/>
    <property type="match status" value="1"/>
</dbReference>
<dbReference type="FunFam" id="3.40.50.300:FF:000078">
    <property type="entry name" value="Elongation factor 4"/>
    <property type="match status" value="1"/>
</dbReference>
<dbReference type="FunFam" id="2.40.30.10:FF:000015">
    <property type="entry name" value="Translation factor GUF1, mitochondrial"/>
    <property type="match status" value="1"/>
</dbReference>
<dbReference type="FunFam" id="3.30.70.240:FF:000007">
    <property type="entry name" value="Translation factor GUF1, mitochondrial"/>
    <property type="match status" value="1"/>
</dbReference>
<dbReference type="FunFam" id="3.30.70.2570:FF:000001">
    <property type="entry name" value="Translation factor GUF1, mitochondrial"/>
    <property type="match status" value="1"/>
</dbReference>
<dbReference type="FunFam" id="3.30.70.870:FF:000004">
    <property type="entry name" value="Translation factor GUF1, mitochondrial"/>
    <property type="match status" value="1"/>
</dbReference>
<dbReference type="Gene3D" id="3.30.70.240">
    <property type="match status" value="1"/>
</dbReference>
<dbReference type="Gene3D" id="3.30.70.2570">
    <property type="entry name" value="Elongation factor 4, C-terminal domain"/>
    <property type="match status" value="1"/>
</dbReference>
<dbReference type="Gene3D" id="3.30.70.870">
    <property type="entry name" value="Elongation Factor G (Translational Gtpase), domain 3"/>
    <property type="match status" value="1"/>
</dbReference>
<dbReference type="Gene3D" id="3.40.50.300">
    <property type="entry name" value="P-loop containing nucleotide triphosphate hydrolases"/>
    <property type="match status" value="1"/>
</dbReference>
<dbReference type="Gene3D" id="2.40.30.10">
    <property type="entry name" value="Translation factors"/>
    <property type="match status" value="1"/>
</dbReference>
<dbReference type="HAMAP" id="MF_00071">
    <property type="entry name" value="LepA"/>
    <property type="match status" value="1"/>
</dbReference>
<dbReference type="InterPro" id="IPR006297">
    <property type="entry name" value="EF-4"/>
</dbReference>
<dbReference type="InterPro" id="IPR035647">
    <property type="entry name" value="EFG_III/V"/>
</dbReference>
<dbReference type="InterPro" id="IPR000640">
    <property type="entry name" value="EFG_V-like"/>
</dbReference>
<dbReference type="InterPro" id="IPR004161">
    <property type="entry name" value="EFTu-like_2"/>
</dbReference>
<dbReference type="InterPro" id="IPR031157">
    <property type="entry name" value="G_TR_CS"/>
</dbReference>
<dbReference type="InterPro" id="IPR038363">
    <property type="entry name" value="LepA_C_sf"/>
</dbReference>
<dbReference type="InterPro" id="IPR013842">
    <property type="entry name" value="LepA_CTD"/>
</dbReference>
<dbReference type="InterPro" id="IPR035654">
    <property type="entry name" value="LepA_IV"/>
</dbReference>
<dbReference type="InterPro" id="IPR027417">
    <property type="entry name" value="P-loop_NTPase"/>
</dbReference>
<dbReference type="InterPro" id="IPR005225">
    <property type="entry name" value="Small_GTP-bd"/>
</dbReference>
<dbReference type="InterPro" id="IPR000795">
    <property type="entry name" value="T_Tr_GTP-bd_dom"/>
</dbReference>
<dbReference type="NCBIfam" id="TIGR01393">
    <property type="entry name" value="lepA"/>
    <property type="match status" value="1"/>
</dbReference>
<dbReference type="NCBIfam" id="TIGR00231">
    <property type="entry name" value="small_GTP"/>
    <property type="match status" value="1"/>
</dbReference>
<dbReference type="PANTHER" id="PTHR43512:SF4">
    <property type="entry name" value="TRANSLATION FACTOR GUF1 HOMOLOG, CHLOROPLASTIC"/>
    <property type="match status" value="1"/>
</dbReference>
<dbReference type="PANTHER" id="PTHR43512">
    <property type="entry name" value="TRANSLATION FACTOR GUF1-RELATED"/>
    <property type="match status" value="1"/>
</dbReference>
<dbReference type="Pfam" id="PF00679">
    <property type="entry name" value="EFG_C"/>
    <property type="match status" value="1"/>
</dbReference>
<dbReference type="Pfam" id="PF00009">
    <property type="entry name" value="GTP_EFTU"/>
    <property type="match status" value="1"/>
</dbReference>
<dbReference type="Pfam" id="PF03144">
    <property type="entry name" value="GTP_EFTU_D2"/>
    <property type="match status" value="1"/>
</dbReference>
<dbReference type="Pfam" id="PF06421">
    <property type="entry name" value="LepA_C"/>
    <property type="match status" value="1"/>
</dbReference>
<dbReference type="PRINTS" id="PR00315">
    <property type="entry name" value="ELONGATNFCT"/>
</dbReference>
<dbReference type="SMART" id="SM00838">
    <property type="entry name" value="EFG_C"/>
    <property type="match status" value="1"/>
</dbReference>
<dbReference type="SUPFAM" id="SSF54980">
    <property type="entry name" value="EF-G C-terminal domain-like"/>
    <property type="match status" value="2"/>
</dbReference>
<dbReference type="SUPFAM" id="SSF52540">
    <property type="entry name" value="P-loop containing nucleoside triphosphate hydrolases"/>
    <property type="match status" value="1"/>
</dbReference>
<dbReference type="PROSITE" id="PS00301">
    <property type="entry name" value="G_TR_1"/>
    <property type="match status" value="1"/>
</dbReference>
<dbReference type="PROSITE" id="PS51722">
    <property type="entry name" value="G_TR_2"/>
    <property type="match status" value="1"/>
</dbReference>
<comment type="function">
    <text evidence="1">Required for accurate and efficient protein synthesis under certain stress conditions. May act as a fidelity factor of the translation reaction, by catalyzing a one-codon backward translocation of tRNAs on improperly translocated ribosomes. Back-translocation proceeds from a post-translocation (POST) complex to a pre-translocation (PRE) complex, thus giving elongation factor G a second chance to translocate the tRNAs correctly. Binds to ribosomes in a GTP-dependent manner.</text>
</comment>
<comment type="catalytic activity">
    <reaction evidence="1">
        <text>GTP + H2O = GDP + phosphate + H(+)</text>
        <dbReference type="Rhea" id="RHEA:19669"/>
        <dbReference type="ChEBI" id="CHEBI:15377"/>
        <dbReference type="ChEBI" id="CHEBI:15378"/>
        <dbReference type="ChEBI" id="CHEBI:37565"/>
        <dbReference type="ChEBI" id="CHEBI:43474"/>
        <dbReference type="ChEBI" id="CHEBI:58189"/>
        <dbReference type="EC" id="3.6.5.n1"/>
    </reaction>
</comment>
<comment type="subcellular location">
    <subcellularLocation>
        <location evidence="1">Cell inner membrane</location>
        <topology evidence="1">Peripheral membrane protein</topology>
        <orientation evidence="1">Cytoplasmic side</orientation>
    </subcellularLocation>
</comment>
<comment type="similarity">
    <text evidence="1">Belongs to the TRAFAC class translation factor GTPase superfamily. Classic translation factor GTPase family. LepA subfamily.</text>
</comment>
<organism>
    <name type="scientific">Rickettsia rickettsii (strain Sheila Smith)</name>
    <dbReference type="NCBI Taxonomy" id="392021"/>
    <lineage>
        <taxon>Bacteria</taxon>
        <taxon>Pseudomonadati</taxon>
        <taxon>Pseudomonadota</taxon>
        <taxon>Alphaproteobacteria</taxon>
        <taxon>Rickettsiales</taxon>
        <taxon>Rickettsiaceae</taxon>
        <taxon>Rickettsieae</taxon>
        <taxon>Rickettsia</taxon>
        <taxon>spotted fever group</taxon>
    </lineage>
</organism>
<name>LEPA_RICRS</name>
<sequence length="600" mass="67265">MNHQKYIRNFSIIAHIDHGKSTLADRLIEHCGGLQAREMSQQVLDSMDIEKERGITIKAQTVRLVYKAKDGNTYYLNLMDTPGHVDFAYEVSRSLAACEGSLLVVDSTQGVEAQTLANVYQAIENDHEIVLVLNKLDLPASEPEQVKQQIEDIIGIDTSEAVLISAKSGIGIDLVLEAIVSKLPPPKESSSDILKALLVDSWYDPYLGVVILVRVIDGYLRKNMRIKMMATNSVYTVENVGYFTPKKHISDVLHAGEIGFFTAAIKQVADCKVGDTITDEKKPCEQALPGFKPQLPVVFCGLYPTDSSEFEHLKDSLAKLRLNDASFEYEMESSSALGVGFRCGFLGLLHLEIIQERLSREFNLDLITTAPSVVYKIHMRDGENLEIHNPADLPDLQKIESMEEPWIKATIMVPDEFLGAVLSLCTEKRGMQLDHSYIANRAKIIYKLPLNEIVYDFYDRLKSCSKGYASFEWQMDVYEPSELVKLGILVNAEVVDALSTIVHRSRAEQRGRALCVRLKDLIPRQQIDIAIQASIGSRIIARETIKALRKDVLSKCYGGDISRKRKLLEKQKAGKKRMRQYGNIEIPQSAFIAALKIGDE</sequence>
<protein>
    <recommendedName>
        <fullName evidence="1">Elongation factor 4</fullName>
        <shortName evidence="1">EF-4</shortName>
        <ecNumber evidence="1">3.6.5.n1</ecNumber>
    </recommendedName>
    <alternativeName>
        <fullName evidence="1">Ribosomal back-translocase LepA</fullName>
    </alternativeName>
</protein>
<keyword id="KW-0997">Cell inner membrane</keyword>
<keyword id="KW-1003">Cell membrane</keyword>
<keyword id="KW-0342">GTP-binding</keyword>
<keyword id="KW-0378">Hydrolase</keyword>
<keyword id="KW-0472">Membrane</keyword>
<keyword id="KW-0547">Nucleotide-binding</keyword>
<keyword id="KW-0648">Protein biosynthesis</keyword>
<feature type="chain" id="PRO_1000032048" description="Elongation factor 4">
    <location>
        <begin position="1"/>
        <end position="600"/>
    </location>
</feature>
<feature type="domain" description="tr-type G">
    <location>
        <begin position="5"/>
        <end position="187"/>
    </location>
</feature>
<feature type="binding site" evidence="1">
    <location>
        <begin position="17"/>
        <end position="22"/>
    </location>
    <ligand>
        <name>GTP</name>
        <dbReference type="ChEBI" id="CHEBI:37565"/>
    </ligand>
</feature>
<feature type="binding site" evidence="1">
    <location>
        <begin position="134"/>
        <end position="137"/>
    </location>
    <ligand>
        <name>GTP</name>
        <dbReference type="ChEBI" id="CHEBI:37565"/>
    </ligand>
</feature>
<evidence type="ECO:0000255" key="1">
    <source>
        <dbReference type="HAMAP-Rule" id="MF_00071"/>
    </source>
</evidence>
<proteinExistence type="inferred from homology"/>